<feature type="chain" id="PRO_0000146829" description="Pyruvate carboxylase subunit A">
    <location>
        <begin position="1"/>
        <end position="491"/>
    </location>
</feature>
<feature type="domain" description="Biotin carboxylation">
    <location>
        <begin position="1"/>
        <end position="445"/>
    </location>
</feature>
<feature type="domain" description="ATP-grasp" evidence="3">
    <location>
        <begin position="120"/>
        <end position="316"/>
    </location>
</feature>
<feature type="active site" evidence="2">
    <location>
        <position position="291"/>
    </location>
</feature>
<feature type="binding site" evidence="1">
    <location>
        <position position="116"/>
    </location>
    <ligand>
        <name>ATP</name>
        <dbReference type="ChEBI" id="CHEBI:30616"/>
    </ligand>
</feature>
<feature type="binding site" evidence="1">
    <location>
        <position position="200"/>
    </location>
    <ligand>
        <name>ATP</name>
        <dbReference type="ChEBI" id="CHEBI:30616"/>
    </ligand>
</feature>
<feature type="binding site" evidence="1">
    <location>
        <position position="235"/>
    </location>
    <ligand>
        <name>ATP</name>
        <dbReference type="ChEBI" id="CHEBI:30616"/>
    </ligand>
</feature>
<gene>
    <name type="primary">pycA</name>
    <name type="ordered locus">MTH_1917</name>
</gene>
<sequence>MFSKILVANRGEIAIRVMRACRELGIKSVAVYSEADKNALFTRYADEAYEIGKPAPSQSYLRIDRILEVAEKAGAEAIHPGYGFLAENPRLGEECEKQGIKLIGPKGSVIEAMGDKITSKKLMKKAGVPVIPGTDQGVSDPDEAARIADSIGYPVIIKASAGGGGIGMRAVYEEDELIRAMESTQSVAASAFGDPTVYIEKYLERPRHIEFQVMADESGNVIHLADRECSIQRRHQKLIEEAPSPIMTPELRERMGSAAVKAAEYIGYENAGTVEFLYSNGDFYFLEMNTRIQVEHPITEVITGVDLVKEQIRVASGEELRFTQKDINIRGHAIECRINAENPLADFAPNPGKITGYRSPGGIGVRVDSGVYMNYEIPPFYDSMISKLIVWGMDRQEAINRMKRALSEYIILGVKTTIPFHKAIMRNEAFRRGELHTHFVDEYRRGIDAEMRKIVKEDQEMVERLQSTFLPSKKVAAISAAIGTYMHSRRG</sequence>
<name>PYCA_METTH</name>
<keyword id="KW-0067">ATP-binding</keyword>
<keyword id="KW-0903">Direct protein sequencing</keyword>
<keyword id="KW-0312">Gluconeogenesis</keyword>
<keyword id="KW-0436">Ligase</keyword>
<keyword id="KW-0460">Magnesium</keyword>
<keyword id="KW-0479">Metal-binding</keyword>
<keyword id="KW-0511">Multifunctional enzyme</keyword>
<keyword id="KW-0547">Nucleotide-binding</keyword>
<keyword id="KW-0670">Pyruvate</keyword>
<keyword id="KW-1185">Reference proteome</keyword>
<accession>O27939</accession>
<proteinExistence type="evidence at protein level"/>
<evidence type="ECO:0000250" key="1"/>
<evidence type="ECO:0000255" key="2"/>
<evidence type="ECO:0000255" key="3">
    <source>
        <dbReference type="PROSITE-ProRule" id="PRU00409"/>
    </source>
</evidence>
<dbReference type="EC" id="6.4.1.1"/>
<dbReference type="EMBL" id="AE000666">
    <property type="protein sequence ID" value="AAB86377.1"/>
    <property type="molecule type" value="Genomic_DNA"/>
</dbReference>
<dbReference type="PIR" id="A69123">
    <property type="entry name" value="A69123"/>
</dbReference>
<dbReference type="RefSeq" id="WP_010877513.1">
    <property type="nucleotide sequence ID" value="NC_000916.1"/>
</dbReference>
<dbReference type="SMR" id="O27939"/>
<dbReference type="FunCoup" id="O27939">
    <property type="interactions" value="274"/>
</dbReference>
<dbReference type="STRING" id="187420.MTH_1917"/>
<dbReference type="PaxDb" id="187420-MTH_1917"/>
<dbReference type="EnsemblBacteria" id="AAB86377">
    <property type="protein sequence ID" value="AAB86377"/>
    <property type="gene ID" value="MTH_1917"/>
</dbReference>
<dbReference type="KEGG" id="mth:MTH_1917"/>
<dbReference type="PATRIC" id="fig|187420.15.peg.1873"/>
<dbReference type="HOGENOM" id="CLU_000395_3_2_2"/>
<dbReference type="InParanoid" id="O27939"/>
<dbReference type="BioCyc" id="MetaCyc:MONOMER-14537"/>
<dbReference type="UniPathway" id="UPA00138"/>
<dbReference type="Proteomes" id="UP000005223">
    <property type="component" value="Chromosome"/>
</dbReference>
<dbReference type="GO" id="GO:0005524">
    <property type="term" value="F:ATP binding"/>
    <property type="evidence" value="ECO:0007669"/>
    <property type="project" value="UniProtKB-KW"/>
</dbReference>
<dbReference type="GO" id="GO:0046872">
    <property type="term" value="F:metal ion binding"/>
    <property type="evidence" value="ECO:0007669"/>
    <property type="project" value="UniProtKB-KW"/>
</dbReference>
<dbReference type="GO" id="GO:0004736">
    <property type="term" value="F:pyruvate carboxylase activity"/>
    <property type="evidence" value="ECO:0007669"/>
    <property type="project" value="UniProtKB-EC"/>
</dbReference>
<dbReference type="GO" id="GO:0006094">
    <property type="term" value="P:gluconeogenesis"/>
    <property type="evidence" value="ECO:0007669"/>
    <property type="project" value="UniProtKB-UniPathway"/>
</dbReference>
<dbReference type="FunFam" id="3.30.1490.20:FF:000003">
    <property type="entry name" value="acetyl-CoA carboxylase isoform X1"/>
    <property type="match status" value="1"/>
</dbReference>
<dbReference type="FunFam" id="3.30.470.20:FF:000028">
    <property type="entry name" value="Methylcrotonoyl-CoA carboxylase subunit alpha, mitochondrial"/>
    <property type="match status" value="1"/>
</dbReference>
<dbReference type="FunFam" id="3.40.50.20:FF:000010">
    <property type="entry name" value="Propionyl-CoA carboxylase subunit alpha"/>
    <property type="match status" value="1"/>
</dbReference>
<dbReference type="Gene3D" id="3.30.470.20">
    <property type="entry name" value="ATP-grasp fold, B domain"/>
    <property type="match status" value="1"/>
</dbReference>
<dbReference type="InterPro" id="IPR051602">
    <property type="entry name" value="ACC_Biotin_Carboxylase"/>
</dbReference>
<dbReference type="InterPro" id="IPR004549">
    <property type="entry name" value="Acetyl_CoA_COase_biotin_COase"/>
</dbReference>
<dbReference type="InterPro" id="IPR011761">
    <property type="entry name" value="ATP-grasp"/>
</dbReference>
<dbReference type="InterPro" id="IPR005481">
    <property type="entry name" value="BC-like_N"/>
</dbReference>
<dbReference type="InterPro" id="IPR011764">
    <property type="entry name" value="Biotin_carboxylation_dom"/>
</dbReference>
<dbReference type="InterPro" id="IPR005482">
    <property type="entry name" value="Biotin_COase_C"/>
</dbReference>
<dbReference type="InterPro" id="IPR005479">
    <property type="entry name" value="CbamoylP_synth_lsu-like_ATP-bd"/>
</dbReference>
<dbReference type="InterPro" id="IPR016185">
    <property type="entry name" value="PreATP-grasp_dom_sf"/>
</dbReference>
<dbReference type="InterPro" id="IPR011054">
    <property type="entry name" value="Rudment_hybrid_motif"/>
</dbReference>
<dbReference type="NCBIfam" id="TIGR00514">
    <property type="entry name" value="accC"/>
    <property type="match status" value="1"/>
</dbReference>
<dbReference type="NCBIfam" id="NF006367">
    <property type="entry name" value="PRK08591.1"/>
    <property type="match status" value="1"/>
</dbReference>
<dbReference type="NCBIfam" id="NF006406">
    <property type="entry name" value="PRK08654.1"/>
    <property type="match status" value="1"/>
</dbReference>
<dbReference type="PANTHER" id="PTHR48095:SF2">
    <property type="entry name" value="BIOTIN CARBOXYLASE, CHLOROPLASTIC"/>
    <property type="match status" value="1"/>
</dbReference>
<dbReference type="PANTHER" id="PTHR48095">
    <property type="entry name" value="PYRUVATE CARBOXYLASE SUBUNIT A"/>
    <property type="match status" value="1"/>
</dbReference>
<dbReference type="Pfam" id="PF02785">
    <property type="entry name" value="Biotin_carb_C"/>
    <property type="match status" value="1"/>
</dbReference>
<dbReference type="Pfam" id="PF00289">
    <property type="entry name" value="Biotin_carb_N"/>
    <property type="match status" value="1"/>
</dbReference>
<dbReference type="Pfam" id="PF02786">
    <property type="entry name" value="CPSase_L_D2"/>
    <property type="match status" value="1"/>
</dbReference>
<dbReference type="SMART" id="SM00878">
    <property type="entry name" value="Biotin_carb_C"/>
    <property type="match status" value="1"/>
</dbReference>
<dbReference type="SUPFAM" id="SSF56059">
    <property type="entry name" value="Glutathione synthetase ATP-binding domain-like"/>
    <property type="match status" value="1"/>
</dbReference>
<dbReference type="SUPFAM" id="SSF52440">
    <property type="entry name" value="PreATP-grasp domain"/>
    <property type="match status" value="1"/>
</dbReference>
<dbReference type="SUPFAM" id="SSF51246">
    <property type="entry name" value="Rudiment single hybrid motif"/>
    <property type="match status" value="1"/>
</dbReference>
<dbReference type="PROSITE" id="PS50975">
    <property type="entry name" value="ATP_GRASP"/>
    <property type="match status" value="1"/>
</dbReference>
<dbReference type="PROSITE" id="PS50979">
    <property type="entry name" value="BC"/>
    <property type="match status" value="1"/>
</dbReference>
<dbReference type="PROSITE" id="PS00866">
    <property type="entry name" value="CPSASE_1"/>
    <property type="match status" value="1"/>
</dbReference>
<dbReference type="PROSITE" id="PS00867">
    <property type="entry name" value="CPSASE_2"/>
    <property type="match status" value="1"/>
</dbReference>
<comment type="function">
    <text>Pyruvate carboxylase catalyzes a 2-step reaction, involving the ATP-dependent carboxylation of the covalently attached biotin in the first step and the transfer of the carboxyl group to pyruvate in the second.</text>
</comment>
<comment type="catalytic activity">
    <reaction>
        <text>hydrogencarbonate + pyruvate + ATP = oxaloacetate + ADP + phosphate + H(+)</text>
        <dbReference type="Rhea" id="RHEA:20844"/>
        <dbReference type="ChEBI" id="CHEBI:15361"/>
        <dbReference type="ChEBI" id="CHEBI:15378"/>
        <dbReference type="ChEBI" id="CHEBI:16452"/>
        <dbReference type="ChEBI" id="CHEBI:17544"/>
        <dbReference type="ChEBI" id="CHEBI:30616"/>
        <dbReference type="ChEBI" id="CHEBI:43474"/>
        <dbReference type="ChEBI" id="CHEBI:456216"/>
        <dbReference type="EC" id="6.4.1.1"/>
    </reaction>
</comment>
<comment type="cofactor">
    <cofactor>
        <name>Mg(2+)</name>
        <dbReference type="ChEBI" id="CHEBI:18420"/>
    </cofactor>
    <cofactor>
        <name>Mn(2+)</name>
        <dbReference type="ChEBI" id="CHEBI:29035"/>
    </cofactor>
    <cofactor>
        <name>Co(2+)</name>
        <dbReference type="ChEBI" id="CHEBI:48828"/>
    </cofactor>
</comment>
<comment type="activity regulation">
    <text>Inhibited by ADP and alpha-ketoglutarate.</text>
</comment>
<comment type="biophysicochemical properties">
    <phDependence>
        <text>Optimum pH is 8.</text>
    </phDependence>
    <temperatureDependence>
        <text>Optimum temperature is 60 degrees Celsius.</text>
    </temperatureDependence>
</comment>
<comment type="pathway">
    <text>Carbohydrate biosynthesis; gluconeogenesis.</text>
</comment>
<comment type="subunit">
    <text>Heterooctamer of four A and four B subunits.</text>
</comment>
<organism>
    <name type="scientific">Methanothermobacter thermautotrophicus (strain ATCC 29096 / DSM 1053 / JCM 10044 / NBRC 100330 / Delta H)</name>
    <name type="common">Methanobacterium thermoautotrophicum</name>
    <dbReference type="NCBI Taxonomy" id="187420"/>
    <lineage>
        <taxon>Archaea</taxon>
        <taxon>Methanobacteriati</taxon>
        <taxon>Methanobacteriota</taxon>
        <taxon>Methanomada group</taxon>
        <taxon>Methanobacteria</taxon>
        <taxon>Methanobacteriales</taxon>
        <taxon>Methanobacteriaceae</taxon>
        <taxon>Methanothermobacter</taxon>
    </lineage>
</organism>
<reference key="1">
    <citation type="journal article" date="1997" name="J. Bacteriol.">
        <title>Complete genome sequence of Methanobacterium thermoautotrophicum deltaH: functional analysis and comparative genomics.</title>
        <authorList>
            <person name="Smith D.R."/>
            <person name="Doucette-Stamm L.A."/>
            <person name="Deloughery C."/>
            <person name="Lee H.-M."/>
            <person name="Dubois J."/>
            <person name="Aldredge T."/>
            <person name="Bashirzadeh R."/>
            <person name="Blakely D."/>
            <person name="Cook R."/>
            <person name="Gilbert K."/>
            <person name="Harrison D."/>
            <person name="Hoang L."/>
            <person name="Keagle P."/>
            <person name="Lumm W."/>
            <person name="Pothier B."/>
            <person name="Qiu D."/>
            <person name="Spadafora R."/>
            <person name="Vicare R."/>
            <person name="Wang Y."/>
            <person name="Wierzbowski J."/>
            <person name="Gibson R."/>
            <person name="Jiwani N."/>
            <person name="Caruso A."/>
            <person name="Bush D."/>
            <person name="Safer H."/>
            <person name="Patwell D."/>
            <person name="Prabhakar S."/>
            <person name="McDougall S."/>
            <person name="Shimer G."/>
            <person name="Goyal A."/>
            <person name="Pietrovski S."/>
            <person name="Church G.M."/>
            <person name="Daniels C.J."/>
            <person name="Mao J.-I."/>
            <person name="Rice P."/>
            <person name="Noelling J."/>
            <person name="Reeve J.N."/>
        </authorList>
    </citation>
    <scope>NUCLEOTIDE SEQUENCE [LARGE SCALE GENOMIC DNA]</scope>
    <source>
        <strain>ATCC 29096 / DSM 1053 / JCM 10044 / NBRC 100330 / Delta H</strain>
    </source>
</reference>
<reference key="2">
    <citation type="journal article" date="1998" name="J. Biol. Chem.">
        <title>Purification, regulation, and molecular and biochemical characterization of pyruvate carboxylase from Methanobacterium thermoautotrophicum strain deltaH.</title>
        <authorList>
            <person name="Mukhopadhyay B."/>
            <person name="Stoddard S.F."/>
            <person name="Wolfe R.S."/>
        </authorList>
    </citation>
    <scope>NUCLEOTIDE SEQUENCE [GENOMIC DNA]</scope>
    <scope>PROTEIN SEQUENCE OF 1-17</scope>
    <source>
        <strain>ATCC 29096 / DSM 1053 / JCM 10044 / NBRC 100330 / Delta H</strain>
    </source>
</reference>
<protein>
    <recommendedName>
        <fullName>Pyruvate carboxylase subunit A</fullName>
        <ecNumber>6.4.1.1</ecNumber>
    </recommendedName>
    <alternativeName>
        <fullName>Pyruvic carboxylase A</fullName>
    </alternativeName>
</protein>